<proteinExistence type="inferred from homology"/>
<feature type="chain" id="PRO_1000069546" description="NAD-dependent malic enzyme">
    <location>
        <begin position="1"/>
        <end position="562"/>
    </location>
</feature>
<feature type="active site" description="Proton donor" evidence="1">
    <location>
        <position position="101"/>
    </location>
</feature>
<feature type="active site" description="Proton acceptor" evidence="1">
    <location>
        <position position="172"/>
    </location>
</feature>
<feature type="binding site" evidence="1">
    <location>
        <position position="154"/>
    </location>
    <ligand>
        <name>NAD(+)</name>
        <dbReference type="ChEBI" id="CHEBI:57540"/>
    </ligand>
</feature>
<feature type="binding site" evidence="1">
    <location>
        <position position="243"/>
    </location>
    <ligand>
        <name>a divalent metal cation</name>
        <dbReference type="ChEBI" id="CHEBI:60240"/>
    </ligand>
</feature>
<feature type="binding site" evidence="1">
    <location>
        <position position="244"/>
    </location>
    <ligand>
        <name>a divalent metal cation</name>
        <dbReference type="ChEBI" id="CHEBI:60240"/>
    </ligand>
</feature>
<feature type="binding site" evidence="1">
    <location>
        <position position="267"/>
    </location>
    <ligand>
        <name>a divalent metal cation</name>
        <dbReference type="ChEBI" id="CHEBI:60240"/>
    </ligand>
</feature>
<feature type="binding site" evidence="1">
    <location>
        <position position="267"/>
    </location>
    <ligand>
        <name>NAD(+)</name>
        <dbReference type="ChEBI" id="CHEBI:57540"/>
    </ligand>
</feature>
<feature type="binding site" evidence="1">
    <location>
        <position position="415"/>
    </location>
    <ligand>
        <name>NAD(+)</name>
        <dbReference type="ChEBI" id="CHEBI:57540"/>
    </ligand>
</feature>
<feature type="site" description="Important for activity" evidence="1">
    <location>
        <position position="267"/>
    </location>
</feature>
<gene>
    <name evidence="1" type="primary">maeA</name>
    <name type="ordered locus">Shewmr4_3188</name>
</gene>
<dbReference type="EC" id="1.1.1.38" evidence="1"/>
<dbReference type="EMBL" id="CP000446">
    <property type="protein sequence ID" value="ABI40258.1"/>
    <property type="molecule type" value="Genomic_DNA"/>
</dbReference>
<dbReference type="RefSeq" id="WP_011623930.1">
    <property type="nucleotide sequence ID" value="NC_008321.1"/>
</dbReference>
<dbReference type="SMR" id="Q0HFA9"/>
<dbReference type="KEGG" id="she:Shewmr4_3188"/>
<dbReference type="HOGENOM" id="CLU_011405_5_2_6"/>
<dbReference type="GO" id="GO:0005829">
    <property type="term" value="C:cytosol"/>
    <property type="evidence" value="ECO:0007669"/>
    <property type="project" value="TreeGrafter"/>
</dbReference>
<dbReference type="GO" id="GO:0004471">
    <property type="term" value="F:malate dehydrogenase (decarboxylating) (NAD+) activity"/>
    <property type="evidence" value="ECO:0007669"/>
    <property type="project" value="UniProtKB-UniRule"/>
</dbReference>
<dbReference type="GO" id="GO:0046872">
    <property type="term" value="F:metal ion binding"/>
    <property type="evidence" value="ECO:0007669"/>
    <property type="project" value="UniProtKB-KW"/>
</dbReference>
<dbReference type="GO" id="GO:0051287">
    <property type="term" value="F:NAD binding"/>
    <property type="evidence" value="ECO:0007669"/>
    <property type="project" value="InterPro"/>
</dbReference>
<dbReference type="GO" id="GO:0008948">
    <property type="term" value="F:oxaloacetate decarboxylase activity"/>
    <property type="evidence" value="ECO:0007669"/>
    <property type="project" value="UniProtKB-UniRule"/>
</dbReference>
<dbReference type="GO" id="GO:0006108">
    <property type="term" value="P:malate metabolic process"/>
    <property type="evidence" value="ECO:0007669"/>
    <property type="project" value="TreeGrafter"/>
</dbReference>
<dbReference type="CDD" id="cd05312">
    <property type="entry name" value="NAD_bind_1_malic_enz"/>
    <property type="match status" value="1"/>
</dbReference>
<dbReference type="FunFam" id="3.40.50.10380:FF:000001">
    <property type="entry name" value="NAD-dependent malic enzyme"/>
    <property type="match status" value="1"/>
</dbReference>
<dbReference type="FunFam" id="3.40.50.720:FF:000055">
    <property type="entry name" value="NAD-dependent malic enzyme"/>
    <property type="match status" value="1"/>
</dbReference>
<dbReference type="Gene3D" id="3.40.50.10380">
    <property type="entry name" value="Malic enzyme, N-terminal domain"/>
    <property type="match status" value="1"/>
</dbReference>
<dbReference type="Gene3D" id="3.40.50.720">
    <property type="entry name" value="NAD(P)-binding Rossmann-like Domain"/>
    <property type="match status" value="1"/>
</dbReference>
<dbReference type="HAMAP" id="MF_01619">
    <property type="entry name" value="NAD_malic_enz"/>
    <property type="match status" value="1"/>
</dbReference>
<dbReference type="InterPro" id="IPR046346">
    <property type="entry name" value="Aminoacid_DH-like_N_sf"/>
</dbReference>
<dbReference type="InterPro" id="IPR015884">
    <property type="entry name" value="Malic_enzyme_CS"/>
</dbReference>
<dbReference type="InterPro" id="IPR012301">
    <property type="entry name" value="Malic_N_dom"/>
</dbReference>
<dbReference type="InterPro" id="IPR037062">
    <property type="entry name" value="Malic_N_dom_sf"/>
</dbReference>
<dbReference type="InterPro" id="IPR012302">
    <property type="entry name" value="Malic_NAD-bd"/>
</dbReference>
<dbReference type="InterPro" id="IPR001891">
    <property type="entry name" value="Malic_OxRdtase"/>
</dbReference>
<dbReference type="InterPro" id="IPR036291">
    <property type="entry name" value="NAD(P)-bd_dom_sf"/>
</dbReference>
<dbReference type="InterPro" id="IPR023667">
    <property type="entry name" value="NAD_malic_enz_proteobac"/>
</dbReference>
<dbReference type="NCBIfam" id="NF010052">
    <property type="entry name" value="PRK13529.1"/>
    <property type="match status" value="1"/>
</dbReference>
<dbReference type="PANTHER" id="PTHR23406">
    <property type="entry name" value="MALIC ENZYME-RELATED"/>
    <property type="match status" value="1"/>
</dbReference>
<dbReference type="PANTHER" id="PTHR23406:SF34">
    <property type="entry name" value="NAD-DEPENDENT MALIC ENZYME, MITOCHONDRIAL"/>
    <property type="match status" value="1"/>
</dbReference>
<dbReference type="Pfam" id="PF00390">
    <property type="entry name" value="malic"/>
    <property type="match status" value="1"/>
</dbReference>
<dbReference type="Pfam" id="PF03949">
    <property type="entry name" value="Malic_M"/>
    <property type="match status" value="1"/>
</dbReference>
<dbReference type="PIRSF" id="PIRSF000106">
    <property type="entry name" value="ME"/>
    <property type="match status" value="1"/>
</dbReference>
<dbReference type="PRINTS" id="PR00072">
    <property type="entry name" value="MALOXRDTASE"/>
</dbReference>
<dbReference type="SMART" id="SM01274">
    <property type="entry name" value="malic"/>
    <property type="match status" value="1"/>
</dbReference>
<dbReference type="SMART" id="SM00919">
    <property type="entry name" value="Malic_M"/>
    <property type="match status" value="1"/>
</dbReference>
<dbReference type="SUPFAM" id="SSF53223">
    <property type="entry name" value="Aminoacid dehydrogenase-like, N-terminal domain"/>
    <property type="match status" value="1"/>
</dbReference>
<dbReference type="SUPFAM" id="SSF51735">
    <property type="entry name" value="NAD(P)-binding Rossmann-fold domains"/>
    <property type="match status" value="1"/>
</dbReference>
<dbReference type="PROSITE" id="PS00331">
    <property type="entry name" value="MALIC_ENZYMES"/>
    <property type="match status" value="1"/>
</dbReference>
<protein>
    <recommendedName>
        <fullName evidence="1">NAD-dependent malic enzyme</fullName>
        <shortName evidence="1">NAD-ME</shortName>
        <ecNumber evidence="1">1.1.1.38</ecNumber>
    </recommendedName>
</protein>
<evidence type="ECO:0000255" key="1">
    <source>
        <dbReference type="HAMAP-Rule" id="MF_01619"/>
    </source>
</evidence>
<reference key="1">
    <citation type="submission" date="2006-08" db="EMBL/GenBank/DDBJ databases">
        <title>Complete sequence of Shewanella sp. MR-4.</title>
        <authorList>
            <consortium name="US DOE Joint Genome Institute"/>
            <person name="Copeland A."/>
            <person name="Lucas S."/>
            <person name="Lapidus A."/>
            <person name="Barry K."/>
            <person name="Detter J.C."/>
            <person name="Glavina del Rio T."/>
            <person name="Hammon N."/>
            <person name="Israni S."/>
            <person name="Dalin E."/>
            <person name="Tice H."/>
            <person name="Pitluck S."/>
            <person name="Kiss H."/>
            <person name="Brettin T."/>
            <person name="Bruce D."/>
            <person name="Han C."/>
            <person name="Tapia R."/>
            <person name="Gilna P."/>
            <person name="Schmutz J."/>
            <person name="Larimer F."/>
            <person name="Land M."/>
            <person name="Hauser L."/>
            <person name="Kyrpides N."/>
            <person name="Mikhailova N."/>
            <person name="Nealson K."/>
            <person name="Konstantinidis K."/>
            <person name="Klappenbach J."/>
            <person name="Tiedje J."/>
            <person name="Richardson P."/>
        </authorList>
    </citation>
    <scope>NUCLEOTIDE SEQUENCE [LARGE SCALE GENOMIC DNA]</scope>
    <source>
        <strain>MR-4</strain>
    </source>
</reference>
<name>MAO1_SHESM</name>
<keyword id="KW-0479">Metal-binding</keyword>
<keyword id="KW-0520">NAD</keyword>
<keyword id="KW-0560">Oxidoreductase</keyword>
<accession>Q0HFA9</accession>
<organism>
    <name type="scientific">Shewanella sp. (strain MR-4)</name>
    <dbReference type="NCBI Taxonomy" id="60480"/>
    <lineage>
        <taxon>Bacteria</taxon>
        <taxon>Pseudomonadati</taxon>
        <taxon>Pseudomonadota</taxon>
        <taxon>Gammaproteobacteria</taxon>
        <taxon>Alteromonadales</taxon>
        <taxon>Shewanellaceae</taxon>
        <taxon>Shewanella</taxon>
    </lineage>
</organism>
<sequence length="562" mass="62222">MDDNKRPLYLPFAGPAILEAPLINKGSAFSEEERIFFNLEGLVPYAIETIEEQASRAYDQFRSFNNDLDKHIYLRNIQDTNETLFYRLVQNHISEMMPIIYTPTVGLACERFSKNYRRNRGLFISYPNKDRIDDILNNSTRQKVKIIVVTDGERILGLGDQGIGGMGIPIGKLSLYTSCGGISPAYTLPITLDVGTDNPQLLEDPMYMGWRHPRIGGEEYAEFIEAFMQAVHVRWPDTLIQFEDFAQKNAMPILERYKERYCCFNDDIQGTAAVTVGSLLAACKAAGTELNKQRVAFLGAGSAGCGIAEAIVAQMVSEGISDEQARSQVCMVDRWGLLLDNMPNLLPFQQKLAQKCADISHWNNFSDNISLLDVVNNVKPTVLIGVSGAPGLFTEEIVRAMHSHCERPIIFPLSNPTSRVEATPKDILHWTSGQALVATGSPFEPVVVDGETYEIAQCNNSFIFPGIGLGVLASGARHVSDAMLMASSRALAECSPLAINGSGPLLPKLEDIHSVSKHIAFAVGKVAIEQGLSLPASDELLMQSIEDNFWKPEYRRYKRTSF</sequence>
<comment type="catalytic activity">
    <reaction evidence="1">
        <text>(S)-malate + NAD(+) = pyruvate + CO2 + NADH</text>
        <dbReference type="Rhea" id="RHEA:12653"/>
        <dbReference type="ChEBI" id="CHEBI:15361"/>
        <dbReference type="ChEBI" id="CHEBI:15589"/>
        <dbReference type="ChEBI" id="CHEBI:16526"/>
        <dbReference type="ChEBI" id="CHEBI:57540"/>
        <dbReference type="ChEBI" id="CHEBI:57945"/>
        <dbReference type="EC" id="1.1.1.38"/>
    </reaction>
</comment>
<comment type="catalytic activity">
    <reaction evidence="1">
        <text>oxaloacetate + H(+) = pyruvate + CO2</text>
        <dbReference type="Rhea" id="RHEA:15641"/>
        <dbReference type="ChEBI" id="CHEBI:15361"/>
        <dbReference type="ChEBI" id="CHEBI:15378"/>
        <dbReference type="ChEBI" id="CHEBI:16452"/>
        <dbReference type="ChEBI" id="CHEBI:16526"/>
        <dbReference type="EC" id="1.1.1.38"/>
    </reaction>
</comment>
<comment type="cofactor">
    <cofactor evidence="1">
        <name>Mg(2+)</name>
        <dbReference type="ChEBI" id="CHEBI:18420"/>
    </cofactor>
    <cofactor evidence="1">
        <name>Mn(2+)</name>
        <dbReference type="ChEBI" id="CHEBI:29035"/>
    </cofactor>
    <text evidence="1">Divalent metal cations. Prefers magnesium or manganese.</text>
</comment>
<comment type="subunit">
    <text evidence="1">Homotetramer.</text>
</comment>
<comment type="similarity">
    <text evidence="1">Belongs to the malic enzymes family.</text>
</comment>